<proteinExistence type="inferred from homology"/>
<keyword id="KW-0030">Aminoacyl-tRNA synthetase</keyword>
<keyword id="KW-0067">ATP-binding</keyword>
<keyword id="KW-0963">Cytoplasm</keyword>
<keyword id="KW-0436">Ligase</keyword>
<keyword id="KW-0460">Magnesium</keyword>
<keyword id="KW-0479">Metal-binding</keyword>
<keyword id="KW-0547">Nucleotide-binding</keyword>
<keyword id="KW-0648">Protein biosynthesis</keyword>
<keyword id="KW-1185">Reference proteome</keyword>
<feature type="chain" id="PRO_1000012890" description="Lysine--tRNA ligase">
    <location>
        <begin position="1"/>
        <end position="509"/>
    </location>
</feature>
<feature type="binding site" evidence="1">
    <location>
        <position position="419"/>
    </location>
    <ligand>
        <name>Mg(2+)</name>
        <dbReference type="ChEBI" id="CHEBI:18420"/>
        <label>1</label>
    </ligand>
</feature>
<feature type="binding site" evidence="1">
    <location>
        <position position="426"/>
    </location>
    <ligand>
        <name>Mg(2+)</name>
        <dbReference type="ChEBI" id="CHEBI:18420"/>
        <label>1</label>
    </ligand>
</feature>
<feature type="binding site" evidence="1">
    <location>
        <position position="426"/>
    </location>
    <ligand>
        <name>Mg(2+)</name>
        <dbReference type="ChEBI" id="CHEBI:18420"/>
        <label>2</label>
    </ligand>
</feature>
<name>SYK_METFK</name>
<accession>Q1H372</accession>
<sequence length="509" mass="57282">MSDAQNAKTVNEAASVQPDENHVIAERREKLKAIREQGVAFPNDFRPEHIAQSLHDSYDAVEAEALESQALGVAIAGRMMLKRVMGKASFATVQDRSGRIQIFITRENVGEATYDAFKKWDLGDIIAARGTLFKTKTGELSVKVSELRLLTKSLRPLPEKFHGLADQETKYRQRYVDLIVSEETRKTFVARSKIVAAIRAFMLSHEFLEVETPMLHPIPGGAAAKPFITHHNALDLQMYMRIAPELYLKRLVVGGFERVFEINRNFRNEGLSVRHNPEFTMMEFYAAYTDYKWLMDFTESCIRAAAIAACGSAVVEYQGRELDLGKPFERLTIIGAIQKYAPQYTLEQLSDQAFLRQELKKFGVEALPHLGLGALQLALFEETAESQLWNPTYIIDYPVEVSPLARASDSDPSITERYELFITGREIANGFSELNDAEDQAARFHAQVAAKEAGDDEAMYYDGDFIRALEYGMPPTGGCGIGIDRLVMLLTDSPSIRDVILFPHMRPEH</sequence>
<reference key="1">
    <citation type="submission" date="2006-03" db="EMBL/GenBank/DDBJ databases">
        <title>Complete sequence of Methylobacillus flagellatus KT.</title>
        <authorList>
            <consortium name="US DOE Joint Genome Institute"/>
            <person name="Copeland A."/>
            <person name="Lucas S."/>
            <person name="Lapidus A."/>
            <person name="Barry K."/>
            <person name="Detter J.C."/>
            <person name="Glavina del Rio T."/>
            <person name="Hammon N."/>
            <person name="Israni S."/>
            <person name="Dalin E."/>
            <person name="Tice H."/>
            <person name="Pitluck S."/>
            <person name="Brettin T."/>
            <person name="Bruce D."/>
            <person name="Han C."/>
            <person name="Tapia R."/>
            <person name="Saunders E."/>
            <person name="Gilna P."/>
            <person name="Schmutz J."/>
            <person name="Larimer F."/>
            <person name="Land M."/>
            <person name="Kyrpides N."/>
            <person name="Anderson I."/>
            <person name="Richardson P."/>
        </authorList>
    </citation>
    <scope>NUCLEOTIDE SEQUENCE [LARGE SCALE GENOMIC DNA]</scope>
    <source>
        <strain>ATCC 51484 / DSM 6875 / VKM B-1610 / KT</strain>
    </source>
</reference>
<gene>
    <name evidence="1" type="primary">lysS</name>
    <name type="ordered locus">Mfla_0797</name>
</gene>
<organism>
    <name type="scientific">Methylobacillus flagellatus (strain ATCC 51484 / DSM 6875 / VKM B-1610 / KT)</name>
    <dbReference type="NCBI Taxonomy" id="265072"/>
    <lineage>
        <taxon>Bacteria</taxon>
        <taxon>Pseudomonadati</taxon>
        <taxon>Pseudomonadota</taxon>
        <taxon>Betaproteobacteria</taxon>
        <taxon>Nitrosomonadales</taxon>
        <taxon>Methylophilaceae</taxon>
        <taxon>Methylobacillus</taxon>
    </lineage>
</organism>
<comment type="catalytic activity">
    <reaction evidence="1">
        <text>tRNA(Lys) + L-lysine + ATP = L-lysyl-tRNA(Lys) + AMP + diphosphate</text>
        <dbReference type="Rhea" id="RHEA:20792"/>
        <dbReference type="Rhea" id="RHEA-COMP:9696"/>
        <dbReference type="Rhea" id="RHEA-COMP:9697"/>
        <dbReference type="ChEBI" id="CHEBI:30616"/>
        <dbReference type="ChEBI" id="CHEBI:32551"/>
        <dbReference type="ChEBI" id="CHEBI:33019"/>
        <dbReference type="ChEBI" id="CHEBI:78442"/>
        <dbReference type="ChEBI" id="CHEBI:78529"/>
        <dbReference type="ChEBI" id="CHEBI:456215"/>
        <dbReference type="EC" id="6.1.1.6"/>
    </reaction>
</comment>
<comment type="cofactor">
    <cofactor evidence="1">
        <name>Mg(2+)</name>
        <dbReference type="ChEBI" id="CHEBI:18420"/>
    </cofactor>
    <text evidence="1">Binds 3 Mg(2+) ions per subunit.</text>
</comment>
<comment type="subunit">
    <text evidence="1">Homodimer.</text>
</comment>
<comment type="subcellular location">
    <subcellularLocation>
        <location evidence="1">Cytoplasm</location>
    </subcellularLocation>
</comment>
<comment type="similarity">
    <text evidence="1">Belongs to the class-II aminoacyl-tRNA synthetase family.</text>
</comment>
<dbReference type="EC" id="6.1.1.6" evidence="1"/>
<dbReference type="EMBL" id="CP000284">
    <property type="protein sequence ID" value="ABE49065.1"/>
    <property type="molecule type" value="Genomic_DNA"/>
</dbReference>
<dbReference type="RefSeq" id="WP_011479162.1">
    <property type="nucleotide sequence ID" value="NC_007947.1"/>
</dbReference>
<dbReference type="SMR" id="Q1H372"/>
<dbReference type="STRING" id="265072.Mfla_0797"/>
<dbReference type="KEGG" id="mfa:Mfla_0797"/>
<dbReference type="eggNOG" id="COG1190">
    <property type="taxonomic scope" value="Bacteria"/>
</dbReference>
<dbReference type="HOGENOM" id="CLU_008255_6_0_4"/>
<dbReference type="OrthoDB" id="9802326at2"/>
<dbReference type="Proteomes" id="UP000002440">
    <property type="component" value="Chromosome"/>
</dbReference>
<dbReference type="GO" id="GO:0005829">
    <property type="term" value="C:cytosol"/>
    <property type="evidence" value="ECO:0007669"/>
    <property type="project" value="TreeGrafter"/>
</dbReference>
<dbReference type="GO" id="GO:0005524">
    <property type="term" value="F:ATP binding"/>
    <property type="evidence" value="ECO:0007669"/>
    <property type="project" value="UniProtKB-UniRule"/>
</dbReference>
<dbReference type="GO" id="GO:0004824">
    <property type="term" value="F:lysine-tRNA ligase activity"/>
    <property type="evidence" value="ECO:0007669"/>
    <property type="project" value="UniProtKB-UniRule"/>
</dbReference>
<dbReference type="GO" id="GO:0000287">
    <property type="term" value="F:magnesium ion binding"/>
    <property type="evidence" value="ECO:0007669"/>
    <property type="project" value="UniProtKB-UniRule"/>
</dbReference>
<dbReference type="GO" id="GO:0000049">
    <property type="term" value="F:tRNA binding"/>
    <property type="evidence" value="ECO:0007669"/>
    <property type="project" value="TreeGrafter"/>
</dbReference>
<dbReference type="GO" id="GO:0006430">
    <property type="term" value="P:lysyl-tRNA aminoacylation"/>
    <property type="evidence" value="ECO:0007669"/>
    <property type="project" value="UniProtKB-UniRule"/>
</dbReference>
<dbReference type="CDD" id="cd00775">
    <property type="entry name" value="LysRS_core"/>
    <property type="match status" value="1"/>
</dbReference>
<dbReference type="CDD" id="cd04322">
    <property type="entry name" value="LysRS_N"/>
    <property type="match status" value="1"/>
</dbReference>
<dbReference type="FunFam" id="2.40.50.140:FF:000024">
    <property type="entry name" value="Lysine--tRNA ligase"/>
    <property type="match status" value="1"/>
</dbReference>
<dbReference type="FunFam" id="3.30.930.10:FF:000001">
    <property type="entry name" value="Lysine--tRNA ligase"/>
    <property type="match status" value="1"/>
</dbReference>
<dbReference type="Gene3D" id="3.30.930.10">
    <property type="entry name" value="Bira Bifunctional Protein, Domain 2"/>
    <property type="match status" value="1"/>
</dbReference>
<dbReference type="Gene3D" id="2.40.50.140">
    <property type="entry name" value="Nucleic acid-binding proteins"/>
    <property type="match status" value="1"/>
</dbReference>
<dbReference type="HAMAP" id="MF_00252">
    <property type="entry name" value="Lys_tRNA_synth_class2"/>
    <property type="match status" value="1"/>
</dbReference>
<dbReference type="InterPro" id="IPR004364">
    <property type="entry name" value="Aa-tRNA-synt_II"/>
</dbReference>
<dbReference type="InterPro" id="IPR006195">
    <property type="entry name" value="aa-tRNA-synth_II"/>
</dbReference>
<dbReference type="InterPro" id="IPR045864">
    <property type="entry name" value="aa-tRNA-synth_II/BPL/LPL"/>
</dbReference>
<dbReference type="InterPro" id="IPR002313">
    <property type="entry name" value="Lys-tRNA-ligase_II"/>
</dbReference>
<dbReference type="InterPro" id="IPR044136">
    <property type="entry name" value="Lys-tRNA-ligase_II_N"/>
</dbReference>
<dbReference type="InterPro" id="IPR018149">
    <property type="entry name" value="Lys-tRNA-synth_II_C"/>
</dbReference>
<dbReference type="InterPro" id="IPR012340">
    <property type="entry name" value="NA-bd_OB-fold"/>
</dbReference>
<dbReference type="InterPro" id="IPR004365">
    <property type="entry name" value="NA-bd_OB_tRNA"/>
</dbReference>
<dbReference type="NCBIfam" id="TIGR00499">
    <property type="entry name" value="lysS_bact"/>
    <property type="match status" value="1"/>
</dbReference>
<dbReference type="NCBIfam" id="NF001756">
    <property type="entry name" value="PRK00484.1"/>
    <property type="match status" value="1"/>
</dbReference>
<dbReference type="PANTHER" id="PTHR42918:SF15">
    <property type="entry name" value="LYSINE--TRNA LIGASE, CHLOROPLASTIC_MITOCHONDRIAL"/>
    <property type="match status" value="1"/>
</dbReference>
<dbReference type="PANTHER" id="PTHR42918">
    <property type="entry name" value="LYSYL-TRNA SYNTHETASE"/>
    <property type="match status" value="1"/>
</dbReference>
<dbReference type="Pfam" id="PF00152">
    <property type="entry name" value="tRNA-synt_2"/>
    <property type="match status" value="1"/>
</dbReference>
<dbReference type="Pfam" id="PF01336">
    <property type="entry name" value="tRNA_anti-codon"/>
    <property type="match status" value="1"/>
</dbReference>
<dbReference type="PRINTS" id="PR00982">
    <property type="entry name" value="TRNASYNTHLYS"/>
</dbReference>
<dbReference type="SUPFAM" id="SSF55681">
    <property type="entry name" value="Class II aaRS and biotin synthetases"/>
    <property type="match status" value="1"/>
</dbReference>
<dbReference type="SUPFAM" id="SSF50249">
    <property type="entry name" value="Nucleic acid-binding proteins"/>
    <property type="match status" value="1"/>
</dbReference>
<dbReference type="PROSITE" id="PS50862">
    <property type="entry name" value="AA_TRNA_LIGASE_II"/>
    <property type="match status" value="1"/>
</dbReference>
<evidence type="ECO:0000255" key="1">
    <source>
        <dbReference type="HAMAP-Rule" id="MF_00252"/>
    </source>
</evidence>
<protein>
    <recommendedName>
        <fullName evidence="1">Lysine--tRNA ligase</fullName>
        <ecNumber evidence="1">6.1.1.6</ecNumber>
    </recommendedName>
    <alternativeName>
        <fullName evidence="1">Lysyl-tRNA synthetase</fullName>
        <shortName evidence="1">LysRS</shortName>
    </alternativeName>
</protein>